<evidence type="ECO:0000255" key="1">
    <source>
        <dbReference type="HAMAP-Rule" id="MF_00096"/>
    </source>
</evidence>
<evidence type="ECO:0000256" key="2">
    <source>
        <dbReference type="SAM" id="MobiDB-lite"/>
    </source>
</evidence>
<accession>Q81A25</accession>
<name>MUTS_BACCR</name>
<protein>
    <recommendedName>
        <fullName evidence="1">DNA mismatch repair protein MutS</fullName>
    </recommendedName>
</protein>
<dbReference type="EMBL" id="AE016877">
    <property type="protein sequence ID" value="AAP10693.1"/>
    <property type="molecule type" value="Genomic_DNA"/>
</dbReference>
<dbReference type="RefSeq" id="NP_833492.1">
    <property type="nucleotide sequence ID" value="NC_004722.1"/>
</dbReference>
<dbReference type="SMR" id="Q81A25"/>
<dbReference type="STRING" id="226900.BC_3769"/>
<dbReference type="KEGG" id="bce:BC3769"/>
<dbReference type="PATRIC" id="fig|226900.8.peg.3885"/>
<dbReference type="HOGENOM" id="CLU_002472_3_1_9"/>
<dbReference type="Proteomes" id="UP000001417">
    <property type="component" value="Chromosome"/>
</dbReference>
<dbReference type="GO" id="GO:0005829">
    <property type="term" value="C:cytosol"/>
    <property type="evidence" value="ECO:0000318"/>
    <property type="project" value="GO_Central"/>
</dbReference>
<dbReference type="GO" id="GO:0005524">
    <property type="term" value="F:ATP binding"/>
    <property type="evidence" value="ECO:0007669"/>
    <property type="project" value="UniProtKB-UniRule"/>
</dbReference>
<dbReference type="GO" id="GO:0140664">
    <property type="term" value="F:ATP-dependent DNA damage sensor activity"/>
    <property type="evidence" value="ECO:0007669"/>
    <property type="project" value="InterPro"/>
</dbReference>
<dbReference type="GO" id="GO:0003684">
    <property type="term" value="F:damaged DNA binding"/>
    <property type="evidence" value="ECO:0007669"/>
    <property type="project" value="UniProtKB-UniRule"/>
</dbReference>
<dbReference type="GO" id="GO:0030983">
    <property type="term" value="F:mismatched DNA binding"/>
    <property type="evidence" value="ECO:0000318"/>
    <property type="project" value="GO_Central"/>
</dbReference>
<dbReference type="GO" id="GO:0006298">
    <property type="term" value="P:mismatch repair"/>
    <property type="evidence" value="ECO:0000318"/>
    <property type="project" value="GO_Central"/>
</dbReference>
<dbReference type="CDD" id="cd03284">
    <property type="entry name" value="ABC_MutS1"/>
    <property type="match status" value="1"/>
</dbReference>
<dbReference type="FunFam" id="1.10.1420.10:FF:000007">
    <property type="entry name" value="DNA mismatch repair protein MutS"/>
    <property type="match status" value="1"/>
</dbReference>
<dbReference type="FunFam" id="3.30.420.110:FF:000007">
    <property type="entry name" value="DNA mismatch repair protein MutS"/>
    <property type="match status" value="1"/>
</dbReference>
<dbReference type="FunFam" id="3.40.1170.10:FF:000001">
    <property type="entry name" value="DNA mismatch repair protein MutS"/>
    <property type="match status" value="1"/>
</dbReference>
<dbReference type="FunFam" id="3.40.50.300:FF:000896">
    <property type="entry name" value="DNA mismatch repair protein MutS"/>
    <property type="match status" value="1"/>
</dbReference>
<dbReference type="Gene3D" id="1.10.1420.10">
    <property type="match status" value="2"/>
</dbReference>
<dbReference type="Gene3D" id="3.40.1170.10">
    <property type="entry name" value="DNA repair protein MutS, domain I"/>
    <property type="match status" value="1"/>
</dbReference>
<dbReference type="Gene3D" id="3.30.420.110">
    <property type="entry name" value="MutS, connector domain"/>
    <property type="match status" value="1"/>
</dbReference>
<dbReference type="Gene3D" id="3.40.50.300">
    <property type="entry name" value="P-loop containing nucleotide triphosphate hydrolases"/>
    <property type="match status" value="1"/>
</dbReference>
<dbReference type="HAMAP" id="MF_00096">
    <property type="entry name" value="MutS"/>
    <property type="match status" value="1"/>
</dbReference>
<dbReference type="InterPro" id="IPR005748">
    <property type="entry name" value="DNA_mismatch_repair_MutS"/>
</dbReference>
<dbReference type="InterPro" id="IPR007695">
    <property type="entry name" value="DNA_mismatch_repair_MutS-lik_N"/>
</dbReference>
<dbReference type="InterPro" id="IPR017261">
    <property type="entry name" value="DNA_mismatch_repair_MutS/MSH"/>
</dbReference>
<dbReference type="InterPro" id="IPR000432">
    <property type="entry name" value="DNA_mismatch_repair_MutS_C"/>
</dbReference>
<dbReference type="InterPro" id="IPR007861">
    <property type="entry name" value="DNA_mismatch_repair_MutS_clamp"/>
</dbReference>
<dbReference type="InterPro" id="IPR007696">
    <property type="entry name" value="DNA_mismatch_repair_MutS_core"/>
</dbReference>
<dbReference type="InterPro" id="IPR016151">
    <property type="entry name" value="DNA_mismatch_repair_MutS_N"/>
</dbReference>
<dbReference type="InterPro" id="IPR036187">
    <property type="entry name" value="DNA_mismatch_repair_MutS_sf"/>
</dbReference>
<dbReference type="InterPro" id="IPR007860">
    <property type="entry name" value="DNA_mmatch_repair_MutS_con_dom"/>
</dbReference>
<dbReference type="InterPro" id="IPR045076">
    <property type="entry name" value="MutS"/>
</dbReference>
<dbReference type="InterPro" id="IPR036678">
    <property type="entry name" value="MutS_con_dom_sf"/>
</dbReference>
<dbReference type="InterPro" id="IPR027417">
    <property type="entry name" value="P-loop_NTPase"/>
</dbReference>
<dbReference type="NCBIfam" id="TIGR01070">
    <property type="entry name" value="mutS1"/>
    <property type="match status" value="1"/>
</dbReference>
<dbReference type="NCBIfam" id="NF003810">
    <property type="entry name" value="PRK05399.1"/>
    <property type="match status" value="1"/>
</dbReference>
<dbReference type="PANTHER" id="PTHR11361:SF34">
    <property type="entry name" value="DNA MISMATCH REPAIR PROTEIN MSH1, MITOCHONDRIAL"/>
    <property type="match status" value="1"/>
</dbReference>
<dbReference type="PANTHER" id="PTHR11361">
    <property type="entry name" value="DNA MISMATCH REPAIR PROTEIN MUTS FAMILY MEMBER"/>
    <property type="match status" value="1"/>
</dbReference>
<dbReference type="Pfam" id="PF01624">
    <property type="entry name" value="MutS_I"/>
    <property type="match status" value="1"/>
</dbReference>
<dbReference type="Pfam" id="PF05188">
    <property type="entry name" value="MutS_II"/>
    <property type="match status" value="1"/>
</dbReference>
<dbReference type="Pfam" id="PF05192">
    <property type="entry name" value="MutS_III"/>
    <property type="match status" value="1"/>
</dbReference>
<dbReference type="Pfam" id="PF05190">
    <property type="entry name" value="MutS_IV"/>
    <property type="match status" value="1"/>
</dbReference>
<dbReference type="Pfam" id="PF00488">
    <property type="entry name" value="MutS_V"/>
    <property type="match status" value="1"/>
</dbReference>
<dbReference type="PIRSF" id="PIRSF037677">
    <property type="entry name" value="DNA_mis_repair_Msh6"/>
    <property type="match status" value="1"/>
</dbReference>
<dbReference type="SMART" id="SM00534">
    <property type="entry name" value="MUTSac"/>
    <property type="match status" value="1"/>
</dbReference>
<dbReference type="SMART" id="SM00533">
    <property type="entry name" value="MUTSd"/>
    <property type="match status" value="1"/>
</dbReference>
<dbReference type="SUPFAM" id="SSF55271">
    <property type="entry name" value="DNA repair protein MutS, domain I"/>
    <property type="match status" value="1"/>
</dbReference>
<dbReference type="SUPFAM" id="SSF53150">
    <property type="entry name" value="DNA repair protein MutS, domain II"/>
    <property type="match status" value="1"/>
</dbReference>
<dbReference type="SUPFAM" id="SSF48334">
    <property type="entry name" value="DNA repair protein MutS, domain III"/>
    <property type="match status" value="1"/>
</dbReference>
<dbReference type="SUPFAM" id="SSF52540">
    <property type="entry name" value="P-loop containing nucleoside triphosphate hydrolases"/>
    <property type="match status" value="1"/>
</dbReference>
<dbReference type="PROSITE" id="PS00486">
    <property type="entry name" value="DNA_MISMATCH_REPAIR_2"/>
    <property type="match status" value="1"/>
</dbReference>
<keyword id="KW-0067">ATP-binding</keyword>
<keyword id="KW-0227">DNA damage</keyword>
<keyword id="KW-0234">DNA repair</keyword>
<keyword id="KW-0238">DNA-binding</keyword>
<keyword id="KW-0547">Nucleotide-binding</keyword>
<keyword id="KW-1185">Reference proteome</keyword>
<proteinExistence type="inferred from homology"/>
<organism>
    <name type="scientific">Bacillus cereus (strain ATCC 14579 / DSM 31 / CCUG 7414 / JCM 2152 / NBRC 15305 / NCIMB 9373 / NCTC 2599 / NRRL B-3711)</name>
    <dbReference type="NCBI Taxonomy" id="226900"/>
    <lineage>
        <taxon>Bacteria</taxon>
        <taxon>Bacillati</taxon>
        <taxon>Bacillota</taxon>
        <taxon>Bacilli</taxon>
        <taxon>Bacillales</taxon>
        <taxon>Bacillaceae</taxon>
        <taxon>Bacillus</taxon>
        <taxon>Bacillus cereus group</taxon>
    </lineage>
</organism>
<comment type="function">
    <text evidence="1">This protein is involved in the repair of mismatches in DNA. It is possible that it carries out the mismatch recognition step. This protein has a weak ATPase activity.</text>
</comment>
<comment type="similarity">
    <text evidence="1">Belongs to the DNA mismatch repair MutS family.</text>
</comment>
<feature type="chain" id="PRO_0000115068" description="DNA mismatch repair protein MutS">
    <location>
        <begin position="1"/>
        <end position="884"/>
    </location>
</feature>
<feature type="region of interest" description="Disordered" evidence="2">
    <location>
        <begin position="826"/>
        <end position="845"/>
    </location>
</feature>
<feature type="binding site" evidence="1">
    <location>
        <begin position="601"/>
        <end position="608"/>
    </location>
    <ligand>
        <name>ATP</name>
        <dbReference type="ChEBI" id="CHEBI:30616"/>
    </ligand>
</feature>
<gene>
    <name evidence="1" type="primary">mutS</name>
    <name type="ordered locus">BC_3769</name>
</gene>
<sequence length="884" mass="100180">MIQQYLKVKADYQDAFLFFRLGDFYEMFFEDAVKAAHELEITLTSRDGGSSERIPMCGVPYHAAKNYIEQLVEKGYKVAVCEQVEDPKTAKGVVRREVVQLITPGTMMEGRTIDEKENNFLAALTHFEDGSYALACNDLTTGQNTVTLLTGSVEDILLEVYATGSKEIVVDSSFSKDELNKLTETLKMTISYEDATAIPEGLEHLVKNVSQAKLIKAVGRLFNYVIRTQKRSLDHLQPVEIYYTNQFMKIDVHSKRNLELTETLRTKEKTGSLLWLLDKTKTAMGGRMLKQWMERPLIQKERIEERLEMVETFVNDYFLREDLKEKLKEVYDLERLAGKVAFGNVNARDLLQLRRSLLQVPAILEAISLLDNAYASRLIQGADPCESLTELLGRSIQENPPLSIKDGDIIKDGYNDKLDQYRYVSKNGKTWIAELEKRERDITGIKSLKIGYNRIFGYYIEVTKANLAALPEGRYERKQTLANAERFITDELKEKETLILEAEEKIVQLEYDLFTALREEVKVFIPKLQHLAKVISELDVLQSFATVSEEEQFVKLVLTTKREIFIKDGRHPVVEKVLNGKLYVPNDCIMPEKMDVFLITGPNMSGKSTYMRQLALVTVMSQIGCFVPATEAVLPVFDQIFTRIGAADDLISGQSTFMVEMLEAKNAIANASERSLILFDEIGRGTSTYDGMALAQAIIEHIHDQIGAKTLFSTHYHELTVLEESLDQLKNVHVSAIEENGKVVFLHKIQDGAADKSYGIHVAQLAELPDSLIARAKEVLAQLEGQEEIIIPKRVEVKVQEAAPEPVVVKEEIAEIQETKVETEEESQLSFFGGEQSSKKQDKPLLDQKETAVLAQIKKIDLLDMTPLEAMNELYRLQKKLKKG</sequence>
<reference key="1">
    <citation type="journal article" date="2003" name="Nature">
        <title>Genome sequence of Bacillus cereus and comparative analysis with Bacillus anthracis.</title>
        <authorList>
            <person name="Ivanova N."/>
            <person name="Sorokin A."/>
            <person name="Anderson I."/>
            <person name="Galleron N."/>
            <person name="Candelon B."/>
            <person name="Kapatral V."/>
            <person name="Bhattacharyya A."/>
            <person name="Reznik G."/>
            <person name="Mikhailova N."/>
            <person name="Lapidus A."/>
            <person name="Chu L."/>
            <person name="Mazur M."/>
            <person name="Goltsman E."/>
            <person name="Larsen N."/>
            <person name="D'Souza M."/>
            <person name="Walunas T."/>
            <person name="Grechkin Y."/>
            <person name="Pusch G."/>
            <person name="Haselkorn R."/>
            <person name="Fonstein M."/>
            <person name="Ehrlich S.D."/>
            <person name="Overbeek R."/>
            <person name="Kyrpides N.C."/>
        </authorList>
    </citation>
    <scope>NUCLEOTIDE SEQUENCE [LARGE SCALE GENOMIC DNA]</scope>
    <source>
        <strain>ATCC 14579 / DSM 31 / CCUG 7414 / JCM 2152 / NBRC 15305 / NCIMB 9373 / NCTC 2599 / NRRL B-3711</strain>
    </source>
</reference>